<comment type="function">
    <text evidence="1">ATP-dependent serine protease that mediates the selective degradation of mutant and abnormal proteins as well as certain short-lived regulatory proteins. Required for cellular homeostasis and for survival from DNA damage and developmental changes induced by stress. Degrades polypeptides processively to yield small peptide fragments that are 5 to 10 amino acids long. Binds to DNA in a double-stranded, site-specific manner.</text>
</comment>
<comment type="catalytic activity">
    <reaction evidence="1">
        <text>Hydrolysis of proteins in presence of ATP.</text>
        <dbReference type="EC" id="3.4.21.53"/>
    </reaction>
</comment>
<comment type="subunit">
    <text evidence="1">Homohexamer. Organized in a ring with a central cavity.</text>
</comment>
<comment type="subcellular location">
    <subcellularLocation>
        <location evidence="1">Cytoplasm</location>
    </subcellularLocation>
</comment>
<comment type="induction">
    <text evidence="1">By heat shock.</text>
</comment>
<comment type="similarity">
    <text evidence="1">Belongs to the peptidase S16 family.</text>
</comment>
<reference key="1">
    <citation type="journal article" date="2007" name="Nat. Biotechnol.">
        <title>Complete genome sequence of the myxobacterium Sorangium cellulosum.</title>
        <authorList>
            <person name="Schneiker S."/>
            <person name="Perlova O."/>
            <person name="Kaiser O."/>
            <person name="Gerth K."/>
            <person name="Alici A."/>
            <person name="Altmeyer M.O."/>
            <person name="Bartels D."/>
            <person name="Bekel T."/>
            <person name="Beyer S."/>
            <person name="Bode E."/>
            <person name="Bode H.B."/>
            <person name="Bolten C.J."/>
            <person name="Choudhuri J.V."/>
            <person name="Doss S."/>
            <person name="Elnakady Y.A."/>
            <person name="Frank B."/>
            <person name="Gaigalat L."/>
            <person name="Goesmann A."/>
            <person name="Groeger C."/>
            <person name="Gross F."/>
            <person name="Jelsbak L."/>
            <person name="Jelsbak L."/>
            <person name="Kalinowski J."/>
            <person name="Kegler C."/>
            <person name="Knauber T."/>
            <person name="Konietzny S."/>
            <person name="Kopp M."/>
            <person name="Krause L."/>
            <person name="Krug D."/>
            <person name="Linke B."/>
            <person name="Mahmud T."/>
            <person name="Martinez-Arias R."/>
            <person name="McHardy A.C."/>
            <person name="Merai M."/>
            <person name="Meyer F."/>
            <person name="Mormann S."/>
            <person name="Munoz-Dorado J."/>
            <person name="Perez J."/>
            <person name="Pradella S."/>
            <person name="Rachid S."/>
            <person name="Raddatz G."/>
            <person name="Rosenau F."/>
            <person name="Rueckert C."/>
            <person name="Sasse F."/>
            <person name="Scharfe M."/>
            <person name="Schuster S.C."/>
            <person name="Suen G."/>
            <person name="Treuner-Lange A."/>
            <person name="Velicer G.J."/>
            <person name="Vorholter F.-J."/>
            <person name="Weissman K.J."/>
            <person name="Welch R.D."/>
            <person name="Wenzel S.C."/>
            <person name="Whitworth D.E."/>
            <person name="Wilhelm S."/>
            <person name="Wittmann C."/>
            <person name="Bloecker H."/>
            <person name="Puehler A."/>
            <person name="Mueller R."/>
        </authorList>
    </citation>
    <scope>NUCLEOTIDE SEQUENCE [LARGE SCALE GENOMIC DNA]</scope>
    <source>
        <strain>So ce56</strain>
    </source>
</reference>
<keyword id="KW-0067">ATP-binding</keyword>
<keyword id="KW-0963">Cytoplasm</keyword>
<keyword id="KW-0378">Hydrolase</keyword>
<keyword id="KW-0547">Nucleotide-binding</keyword>
<keyword id="KW-0645">Protease</keyword>
<keyword id="KW-1185">Reference proteome</keyword>
<keyword id="KW-0720">Serine protease</keyword>
<keyword id="KW-0346">Stress response</keyword>
<protein>
    <recommendedName>
        <fullName evidence="1">Lon protease 3</fullName>
        <ecNumber evidence="1">3.4.21.53</ecNumber>
    </recommendedName>
    <alternativeName>
        <fullName evidence="1">ATP-dependent protease La 3</fullName>
    </alternativeName>
</protein>
<accession>A9GIS9</accession>
<gene>
    <name evidence="1" type="primary">lon3</name>
    <name type="ordered locus">sce3149</name>
</gene>
<organism>
    <name type="scientific">Sorangium cellulosum (strain So ce56)</name>
    <name type="common">Polyangium cellulosum (strain So ce56)</name>
    <dbReference type="NCBI Taxonomy" id="448385"/>
    <lineage>
        <taxon>Bacteria</taxon>
        <taxon>Pseudomonadati</taxon>
        <taxon>Myxococcota</taxon>
        <taxon>Polyangia</taxon>
        <taxon>Polyangiales</taxon>
        <taxon>Polyangiaceae</taxon>
        <taxon>Sorangium</taxon>
    </lineage>
</organism>
<dbReference type="EC" id="3.4.21.53" evidence="1"/>
<dbReference type="EMBL" id="AM746676">
    <property type="protein sequence ID" value="CAN93308.1"/>
    <property type="molecule type" value="Genomic_DNA"/>
</dbReference>
<dbReference type="RefSeq" id="WP_012235780.1">
    <property type="nucleotide sequence ID" value="NC_010162.1"/>
</dbReference>
<dbReference type="SMR" id="A9GIS9"/>
<dbReference type="STRING" id="448385.sce3149"/>
<dbReference type="MEROPS" id="S16.001"/>
<dbReference type="KEGG" id="scl:sce3149"/>
<dbReference type="eggNOG" id="COG0466">
    <property type="taxonomic scope" value="Bacteria"/>
</dbReference>
<dbReference type="HOGENOM" id="CLU_004109_4_3_7"/>
<dbReference type="OrthoDB" id="9803599at2"/>
<dbReference type="BioCyc" id="SCEL448385:SCE_RS16135-MONOMER"/>
<dbReference type="Proteomes" id="UP000002139">
    <property type="component" value="Chromosome"/>
</dbReference>
<dbReference type="GO" id="GO:0005737">
    <property type="term" value="C:cytoplasm"/>
    <property type="evidence" value="ECO:0007669"/>
    <property type="project" value="UniProtKB-SubCell"/>
</dbReference>
<dbReference type="GO" id="GO:0005524">
    <property type="term" value="F:ATP binding"/>
    <property type="evidence" value="ECO:0007669"/>
    <property type="project" value="UniProtKB-UniRule"/>
</dbReference>
<dbReference type="GO" id="GO:0016887">
    <property type="term" value="F:ATP hydrolysis activity"/>
    <property type="evidence" value="ECO:0007669"/>
    <property type="project" value="UniProtKB-UniRule"/>
</dbReference>
<dbReference type="GO" id="GO:0004176">
    <property type="term" value="F:ATP-dependent peptidase activity"/>
    <property type="evidence" value="ECO:0007669"/>
    <property type="project" value="UniProtKB-UniRule"/>
</dbReference>
<dbReference type="GO" id="GO:0043565">
    <property type="term" value="F:sequence-specific DNA binding"/>
    <property type="evidence" value="ECO:0007669"/>
    <property type="project" value="UniProtKB-UniRule"/>
</dbReference>
<dbReference type="GO" id="GO:0004252">
    <property type="term" value="F:serine-type endopeptidase activity"/>
    <property type="evidence" value="ECO:0007669"/>
    <property type="project" value="UniProtKB-UniRule"/>
</dbReference>
<dbReference type="GO" id="GO:0034605">
    <property type="term" value="P:cellular response to heat"/>
    <property type="evidence" value="ECO:0007669"/>
    <property type="project" value="UniProtKB-UniRule"/>
</dbReference>
<dbReference type="GO" id="GO:0006515">
    <property type="term" value="P:protein quality control for misfolded or incompletely synthesized proteins"/>
    <property type="evidence" value="ECO:0007669"/>
    <property type="project" value="UniProtKB-UniRule"/>
</dbReference>
<dbReference type="CDD" id="cd19500">
    <property type="entry name" value="RecA-like_Lon"/>
    <property type="match status" value="1"/>
</dbReference>
<dbReference type="FunFam" id="1.20.5.5270:FF:000002">
    <property type="entry name" value="Lon protease homolog"/>
    <property type="match status" value="1"/>
</dbReference>
<dbReference type="FunFam" id="3.40.50.300:FF:000382">
    <property type="entry name" value="Lon protease homolog 2, peroxisomal"/>
    <property type="match status" value="1"/>
</dbReference>
<dbReference type="Gene3D" id="1.10.8.60">
    <property type="match status" value="1"/>
</dbReference>
<dbReference type="Gene3D" id="1.20.5.5270">
    <property type="match status" value="1"/>
</dbReference>
<dbReference type="Gene3D" id="1.20.58.1480">
    <property type="match status" value="1"/>
</dbReference>
<dbReference type="Gene3D" id="3.30.230.10">
    <property type="match status" value="1"/>
</dbReference>
<dbReference type="Gene3D" id="2.30.130.40">
    <property type="entry name" value="LON domain-like"/>
    <property type="match status" value="1"/>
</dbReference>
<dbReference type="Gene3D" id="3.40.50.300">
    <property type="entry name" value="P-loop containing nucleotide triphosphate hydrolases"/>
    <property type="match status" value="1"/>
</dbReference>
<dbReference type="HAMAP" id="MF_01973">
    <property type="entry name" value="lon_bact"/>
    <property type="match status" value="1"/>
</dbReference>
<dbReference type="InterPro" id="IPR003593">
    <property type="entry name" value="AAA+_ATPase"/>
</dbReference>
<dbReference type="InterPro" id="IPR003959">
    <property type="entry name" value="ATPase_AAA_core"/>
</dbReference>
<dbReference type="InterPro" id="IPR027543">
    <property type="entry name" value="Lon_bac"/>
</dbReference>
<dbReference type="InterPro" id="IPR004815">
    <property type="entry name" value="Lon_bac/euk-typ"/>
</dbReference>
<dbReference type="InterPro" id="IPR054594">
    <property type="entry name" value="Lon_lid"/>
</dbReference>
<dbReference type="InterPro" id="IPR008269">
    <property type="entry name" value="Lon_proteolytic"/>
</dbReference>
<dbReference type="InterPro" id="IPR027065">
    <property type="entry name" value="Lon_Prtase"/>
</dbReference>
<dbReference type="InterPro" id="IPR003111">
    <property type="entry name" value="Lon_prtase_N"/>
</dbReference>
<dbReference type="InterPro" id="IPR046336">
    <property type="entry name" value="Lon_prtase_N_sf"/>
</dbReference>
<dbReference type="InterPro" id="IPR027417">
    <property type="entry name" value="P-loop_NTPase"/>
</dbReference>
<dbReference type="InterPro" id="IPR008268">
    <property type="entry name" value="Peptidase_S16_AS"/>
</dbReference>
<dbReference type="InterPro" id="IPR015947">
    <property type="entry name" value="PUA-like_sf"/>
</dbReference>
<dbReference type="InterPro" id="IPR020568">
    <property type="entry name" value="Ribosomal_Su5_D2-typ_SF"/>
</dbReference>
<dbReference type="InterPro" id="IPR014721">
    <property type="entry name" value="Ribsml_uS5_D2-typ_fold_subgr"/>
</dbReference>
<dbReference type="NCBIfam" id="TIGR00763">
    <property type="entry name" value="lon"/>
    <property type="match status" value="1"/>
</dbReference>
<dbReference type="NCBIfam" id="NF008053">
    <property type="entry name" value="PRK10787.1"/>
    <property type="match status" value="1"/>
</dbReference>
<dbReference type="PANTHER" id="PTHR10046">
    <property type="entry name" value="ATP DEPENDENT LON PROTEASE FAMILY MEMBER"/>
    <property type="match status" value="1"/>
</dbReference>
<dbReference type="Pfam" id="PF00004">
    <property type="entry name" value="AAA"/>
    <property type="match status" value="1"/>
</dbReference>
<dbReference type="Pfam" id="PF05362">
    <property type="entry name" value="Lon_C"/>
    <property type="match status" value="1"/>
</dbReference>
<dbReference type="Pfam" id="PF22667">
    <property type="entry name" value="Lon_lid"/>
    <property type="match status" value="1"/>
</dbReference>
<dbReference type="Pfam" id="PF02190">
    <property type="entry name" value="LON_substr_bdg"/>
    <property type="match status" value="1"/>
</dbReference>
<dbReference type="PIRSF" id="PIRSF001174">
    <property type="entry name" value="Lon_proteas"/>
    <property type="match status" value="1"/>
</dbReference>
<dbReference type="PRINTS" id="PR00830">
    <property type="entry name" value="ENDOLAPTASE"/>
</dbReference>
<dbReference type="SMART" id="SM00382">
    <property type="entry name" value="AAA"/>
    <property type="match status" value="1"/>
</dbReference>
<dbReference type="SMART" id="SM00464">
    <property type="entry name" value="LON"/>
    <property type="match status" value="1"/>
</dbReference>
<dbReference type="SUPFAM" id="SSF52540">
    <property type="entry name" value="P-loop containing nucleoside triphosphate hydrolases"/>
    <property type="match status" value="1"/>
</dbReference>
<dbReference type="SUPFAM" id="SSF88697">
    <property type="entry name" value="PUA domain-like"/>
    <property type="match status" value="1"/>
</dbReference>
<dbReference type="SUPFAM" id="SSF54211">
    <property type="entry name" value="Ribosomal protein S5 domain 2-like"/>
    <property type="match status" value="1"/>
</dbReference>
<dbReference type="PROSITE" id="PS51787">
    <property type="entry name" value="LON_N"/>
    <property type="match status" value="1"/>
</dbReference>
<dbReference type="PROSITE" id="PS51786">
    <property type="entry name" value="LON_PROTEOLYTIC"/>
    <property type="match status" value="1"/>
</dbReference>
<dbReference type="PROSITE" id="PS01046">
    <property type="entry name" value="LON_SER"/>
    <property type="match status" value="1"/>
</dbReference>
<sequence length="830" mass="92887">MFFKNDSDRGKNAPERGIVPLLPLRDIIVFPHMVSQLFVGRERSIAALDEAMNRGKEIFLAAQRNAKTNDPTPDDIFGVGSVGAIMQLLRLPDGTVKVLIEGKRRARIRRYVQSDAYFLIEYDEIVESSVASVEVEALMRSVQSTFEMYVKLNKKIQPEVLMAVQAIDEASRLADTIIANLPTIKLTDRQALLEMEEPQKRLERLIELMQAEIEILQVEKKIRSRVKKQMEKTQKEYYLNEQMQAIQKELGGGERDEFKNEIQEIEEALKTKRMSKEAAAKVKKELKKLKMMHPTSAEATVVRNYIDWILELPWYDKSEERYDLVEAERILDEDHYGLKKIKERILEYLAVQALTKKLKGPVLCFVGPPGVGKTSLAKSIARATGRKFVRLSLGGVRDEAEIRGHRRTYIGALPGKLIQSLKKVGTNNPVFLLDEVDKMSTDFRGDPAAALLEVLDPEQNHTFNDHYLDLDYDLSDVMFITTANTLSGIPVPLQDRMEVIQLSGYTEFEKLNIAVKYLVPRQRKECGLEDVSLDFTEGALRTIIHHYTKESGVRSLEREIASVCRKVARRVVSDGKEKPIEVVAKSIPKYLGVPKYRLGRREERDEVGLVNGLAVTNVGGDLLPAEATVVPGKGKLVITGLLEKGMEESGHAAMSYVRSRLDRLGLEADVYQKVDVHIHFPDFVRKDGPSAGVTMVTALVSSLMKVPVRRDLAMTGEITLRGRVMPIGGLKEKLLAAHRGGIATVILPKENRKDLRDVPRRVLKALRLVLVEHVDDVLREALILPDAYAIFGPPKGVLEYRDGELVTEAAPVKAPPAAAGEPTPAAPPGA</sequence>
<name>LON3_SORC5</name>
<proteinExistence type="inferred from homology"/>
<evidence type="ECO:0000255" key="1">
    <source>
        <dbReference type="HAMAP-Rule" id="MF_01973"/>
    </source>
</evidence>
<evidence type="ECO:0000255" key="2">
    <source>
        <dbReference type="PROSITE-ProRule" id="PRU01122"/>
    </source>
</evidence>
<evidence type="ECO:0000255" key="3">
    <source>
        <dbReference type="PROSITE-ProRule" id="PRU01123"/>
    </source>
</evidence>
<evidence type="ECO:0000256" key="4">
    <source>
        <dbReference type="SAM" id="MobiDB-lite"/>
    </source>
</evidence>
<feature type="chain" id="PRO_0000396602" description="Lon protease 3">
    <location>
        <begin position="1"/>
        <end position="830"/>
    </location>
</feature>
<feature type="domain" description="Lon N-terminal" evidence="3">
    <location>
        <begin position="19"/>
        <end position="213"/>
    </location>
</feature>
<feature type="domain" description="Lon proteolytic" evidence="2">
    <location>
        <begin position="604"/>
        <end position="784"/>
    </location>
</feature>
<feature type="region of interest" description="Disordered" evidence="4">
    <location>
        <begin position="811"/>
        <end position="830"/>
    </location>
</feature>
<feature type="compositionally biased region" description="Low complexity" evidence="4">
    <location>
        <begin position="811"/>
        <end position="823"/>
    </location>
</feature>
<feature type="active site" evidence="1">
    <location>
        <position position="690"/>
    </location>
</feature>
<feature type="active site" evidence="1">
    <location>
        <position position="733"/>
    </location>
</feature>
<feature type="binding site" evidence="1">
    <location>
        <begin position="367"/>
        <end position="374"/>
    </location>
    <ligand>
        <name>ATP</name>
        <dbReference type="ChEBI" id="CHEBI:30616"/>
    </ligand>
</feature>